<dbReference type="EC" id="2.3.3.13" evidence="1"/>
<dbReference type="EMBL" id="AE016826">
    <property type="protein sequence ID" value="AAO27198.1"/>
    <property type="molecule type" value="Genomic_DNA"/>
</dbReference>
<dbReference type="SMR" id="Q89A49"/>
<dbReference type="STRING" id="224915.bbp_493"/>
<dbReference type="KEGG" id="bab:bbp_493"/>
<dbReference type="eggNOG" id="COG0119">
    <property type="taxonomic scope" value="Bacteria"/>
</dbReference>
<dbReference type="HOGENOM" id="CLU_022158_3_1_6"/>
<dbReference type="OrthoDB" id="9803573at2"/>
<dbReference type="UniPathway" id="UPA00048">
    <property type="reaction ID" value="UER00070"/>
</dbReference>
<dbReference type="Proteomes" id="UP000000601">
    <property type="component" value="Chromosome"/>
</dbReference>
<dbReference type="GO" id="GO:0005829">
    <property type="term" value="C:cytosol"/>
    <property type="evidence" value="ECO:0007669"/>
    <property type="project" value="TreeGrafter"/>
</dbReference>
<dbReference type="GO" id="GO:0003852">
    <property type="term" value="F:2-isopropylmalate synthase activity"/>
    <property type="evidence" value="ECO:0007669"/>
    <property type="project" value="UniProtKB-EC"/>
</dbReference>
<dbReference type="GO" id="GO:0046872">
    <property type="term" value="F:metal ion binding"/>
    <property type="evidence" value="ECO:0007669"/>
    <property type="project" value="UniProtKB-KW"/>
</dbReference>
<dbReference type="GO" id="GO:0009098">
    <property type="term" value="P:L-leucine biosynthetic process"/>
    <property type="evidence" value="ECO:0007669"/>
    <property type="project" value="UniProtKB-UniPathway"/>
</dbReference>
<dbReference type="CDD" id="cd07940">
    <property type="entry name" value="DRE_TIM_IPMS"/>
    <property type="match status" value="1"/>
</dbReference>
<dbReference type="FunFam" id="1.10.238.260:FF:000001">
    <property type="entry name" value="2-isopropylmalate synthase"/>
    <property type="match status" value="1"/>
</dbReference>
<dbReference type="FunFam" id="3.20.20.70:FF:000010">
    <property type="entry name" value="2-isopropylmalate synthase"/>
    <property type="match status" value="1"/>
</dbReference>
<dbReference type="Gene3D" id="1.10.238.260">
    <property type="match status" value="1"/>
</dbReference>
<dbReference type="Gene3D" id="3.20.20.70">
    <property type="entry name" value="Aldolase class I"/>
    <property type="match status" value="1"/>
</dbReference>
<dbReference type="InterPro" id="IPR050073">
    <property type="entry name" value="2-IPM_HCS-like"/>
</dbReference>
<dbReference type="InterPro" id="IPR002034">
    <property type="entry name" value="AIPM/Hcit_synth_CS"/>
</dbReference>
<dbReference type="InterPro" id="IPR013785">
    <property type="entry name" value="Aldolase_TIM"/>
</dbReference>
<dbReference type="InterPro" id="IPR054691">
    <property type="entry name" value="LeuA/HCS_post-cat"/>
</dbReference>
<dbReference type="InterPro" id="IPR005671">
    <property type="entry name" value="LeuA_bact_synth"/>
</dbReference>
<dbReference type="InterPro" id="IPR000891">
    <property type="entry name" value="PYR_CT"/>
</dbReference>
<dbReference type="NCBIfam" id="TIGR00973">
    <property type="entry name" value="leuA_bact"/>
    <property type="match status" value="1"/>
</dbReference>
<dbReference type="NCBIfam" id="NF002086">
    <property type="entry name" value="PRK00915.1-3"/>
    <property type="match status" value="1"/>
</dbReference>
<dbReference type="PANTHER" id="PTHR10277:SF9">
    <property type="entry name" value="2-ISOPROPYLMALATE SYNTHASE 1, CHLOROPLASTIC-RELATED"/>
    <property type="match status" value="1"/>
</dbReference>
<dbReference type="PANTHER" id="PTHR10277">
    <property type="entry name" value="HOMOCITRATE SYNTHASE-RELATED"/>
    <property type="match status" value="1"/>
</dbReference>
<dbReference type="Pfam" id="PF22617">
    <property type="entry name" value="HCS_D2"/>
    <property type="match status" value="1"/>
</dbReference>
<dbReference type="Pfam" id="PF00682">
    <property type="entry name" value="HMGL-like"/>
    <property type="match status" value="1"/>
</dbReference>
<dbReference type="SUPFAM" id="SSF51569">
    <property type="entry name" value="Aldolase"/>
    <property type="match status" value="1"/>
</dbReference>
<dbReference type="PROSITE" id="PS00815">
    <property type="entry name" value="AIPM_HOMOCIT_SYNTH_1"/>
    <property type="match status" value="1"/>
</dbReference>
<dbReference type="PROSITE" id="PS00816">
    <property type="entry name" value="AIPM_HOMOCIT_SYNTH_2"/>
    <property type="match status" value="1"/>
</dbReference>
<dbReference type="PROSITE" id="PS50991">
    <property type="entry name" value="PYR_CT"/>
    <property type="match status" value="1"/>
</dbReference>
<accession>Q89A49</accession>
<reference key="1">
    <citation type="journal article" date="2003" name="Proc. Natl. Acad. Sci. U.S.A.">
        <title>Reductive genome evolution in Buchnera aphidicola.</title>
        <authorList>
            <person name="van Ham R.C.H.J."/>
            <person name="Kamerbeek J."/>
            <person name="Palacios C."/>
            <person name="Rausell C."/>
            <person name="Abascal F."/>
            <person name="Bastolla U."/>
            <person name="Fernandez J.M."/>
            <person name="Jimenez L."/>
            <person name="Postigo M."/>
            <person name="Silva F.J."/>
            <person name="Tamames J."/>
            <person name="Viguera E."/>
            <person name="Latorre A."/>
            <person name="Valencia A."/>
            <person name="Moran F."/>
            <person name="Moya A."/>
        </authorList>
    </citation>
    <scope>NUCLEOTIDE SEQUENCE [LARGE SCALE GENOMIC DNA]</scope>
    <source>
        <strain>Bp</strain>
    </source>
</reference>
<gene>
    <name evidence="1 3" type="primary">leuA</name>
    <name type="ordered locus">bbp_493</name>
</gene>
<keyword id="KW-0028">Amino-acid biosynthesis</keyword>
<keyword id="KW-0100">Branched-chain amino acid biosynthesis</keyword>
<keyword id="KW-0963">Cytoplasm</keyword>
<keyword id="KW-0432">Leucine biosynthesis</keyword>
<keyword id="KW-0464">Manganese</keyword>
<keyword id="KW-0479">Metal-binding</keyword>
<keyword id="KW-1185">Reference proteome</keyword>
<keyword id="KW-0808">Transferase</keyword>
<sequence>MTQKIIIFDTTLRDGEQSLKMSLSVKKKLKIAFALEKLGVDVIEAGFPISSPGDFESVKKISERIKDAKICSLARCIDGDIDIAAKAMKKANSFRIHIFLGTSALHVQSKLKKTFDQIIDMMVSSVKRAQKYTDDVEFSCEDAGRTSLDDLCRIIELAIDLGVKTINIPDTVGYTIPYEFSNIISSIYKKVPNIDKAIISVHCHDDLGMAVANSISAIQVGARQIEGTITGVGERAGNAALEEILMAIKIRKDILNFKTNIKYQEIYSTCRVISSICNIPVPVNKAIIGSNAFSHSSGIHQDGILKDKKTYEIIVPESIGFVSQPLNLTSRSGRAAVKYRMKKIGYKDSDYNIDILYSRFLKLADKKGRVSDSDLKQLVCFNNKLKNLKD</sequence>
<name>LEU1_BUCBP</name>
<comment type="function">
    <text evidence="1">Catalyzes the condensation of the acetyl group of acetyl-CoA with 3-methyl-2-oxobutanoate (2-ketoisovalerate) to form 3-carboxy-3-hydroxy-4-methylpentanoate (2-isopropylmalate).</text>
</comment>
<comment type="catalytic activity">
    <reaction evidence="1">
        <text>3-methyl-2-oxobutanoate + acetyl-CoA + H2O = (2S)-2-isopropylmalate + CoA + H(+)</text>
        <dbReference type="Rhea" id="RHEA:21524"/>
        <dbReference type="ChEBI" id="CHEBI:1178"/>
        <dbReference type="ChEBI" id="CHEBI:11851"/>
        <dbReference type="ChEBI" id="CHEBI:15377"/>
        <dbReference type="ChEBI" id="CHEBI:15378"/>
        <dbReference type="ChEBI" id="CHEBI:57287"/>
        <dbReference type="ChEBI" id="CHEBI:57288"/>
        <dbReference type="EC" id="2.3.3.13"/>
    </reaction>
</comment>
<comment type="cofactor">
    <cofactor evidence="1">
        <name>Mn(2+)</name>
        <dbReference type="ChEBI" id="CHEBI:29035"/>
    </cofactor>
</comment>
<comment type="pathway">
    <text evidence="1">Amino-acid biosynthesis; L-leucine biosynthesis; L-leucine from 3-methyl-2-oxobutanoate: step 1/4.</text>
</comment>
<comment type="subunit">
    <text evidence="1">Homodimer.</text>
</comment>
<comment type="subcellular location">
    <subcellularLocation>
        <location evidence="1">Cytoplasm</location>
    </subcellularLocation>
</comment>
<comment type="similarity">
    <text evidence="4">Belongs to the alpha-IPM synthase/homocitrate synthase family. LeuA type 1 subfamily.</text>
</comment>
<comment type="caution">
    <text evidence="4">Could be the product of a pseudogene. It lacks about 130 C-terminal residues, which corresponds to the regulatory domain.</text>
</comment>
<feature type="chain" id="PRO_0000140336" description="Putative 2-isopropylmalate synthase">
    <location>
        <begin position="1"/>
        <end position="390"/>
    </location>
</feature>
<feature type="domain" description="Pyruvate carboxyltransferase" evidence="2">
    <location>
        <begin position="5"/>
        <end position="267"/>
    </location>
</feature>
<feature type="binding site" evidence="1">
    <location>
        <position position="14"/>
    </location>
    <ligand>
        <name>Mn(2+)</name>
        <dbReference type="ChEBI" id="CHEBI:29035"/>
    </ligand>
</feature>
<feature type="binding site" evidence="1">
    <location>
        <position position="202"/>
    </location>
    <ligand>
        <name>Mn(2+)</name>
        <dbReference type="ChEBI" id="CHEBI:29035"/>
    </ligand>
</feature>
<feature type="binding site" evidence="1">
    <location>
        <position position="204"/>
    </location>
    <ligand>
        <name>Mn(2+)</name>
        <dbReference type="ChEBI" id="CHEBI:29035"/>
    </ligand>
</feature>
<feature type="binding site" evidence="1">
    <location>
        <position position="238"/>
    </location>
    <ligand>
        <name>Mn(2+)</name>
        <dbReference type="ChEBI" id="CHEBI:29035"/>
    </ligand>
</feature>
<protein>
    <recommendedName>
        <fullName evidence="1">Putative 2-isopropylmalate synthase</fullName>
        <ecNumber evidence="1">2.3.3.13</ecNumber>
    </recommendedName>
    <alternativeName>
        <fullName evidence="1">Alpha-IPM synthase</fullName>
    </alternativeName>
    <alternativeName>
        <fullName evidence="1">Alpha-isopropylmalate synthase</fullName>
    </alternativeName>
</protein>
<evidence type="ECO:0000250" key="1">
    <source>
        <dbReference type="UniProtKB" id="Q9JZG1"/>
    </source>
</evidence>
<evidence type="ECO:0000255" key="2">
    <source>
        <dbReference type="PROSITE-ProRule" id="PRU01151"/>
    </source>
</evidence>
<evidence type="ECO:0000303" key="3">
    <source>
    </source>
</evidence>
<evidence type="ECO:0000305" key="4"/>
<proteinExistence type="uncertain"/>
<organism>
    <name type="scientific">Buchnera aphidicola subsp. Baizongia pistaciae (strain Bp)</name>
    <dbReference type="NCBI Taxonomy" id="224915"/>
    <lineage>
        <taxon>Bacteria</taxon>
        <taxon>Pseudomonadati</taxon>
        <taxon>Pseudomonadota</taxon>
        <taxon>Gammaproteobacteria</taxon>
        <taxon>Enterobacterales</taxon>
        <taxon>Erwiniaceae</taxon>
        <taxon>Buchnera</taxon>
    </lineage>
</organism>